<dbReference type="GO" id="GO:0005576">
    <property type="term" value="C:extracellular region"/>
    <property type="evidence" value="ECO:0007669"/>
    <property type="project" value="UniProtKB-SubCell"/>
</dbReference>
<dbReference type="GO" id="GO:0007218">
    <property type="term" value="P:neuropeptide signaling pathway"/>
    <property type="evidence" value="ECO:0007669"/>
    <property type="project" value="UniProtKB-KW"/>
</dbReference>
<protein>
    <recommendedName>
        <fullName>FMRFamide-like neuropeptide YLRF-amide</fullName>
    </recommendedName>
</protein>
<reference key="1">
    <citation type="journal article" date="1991" name="Peptides">
        <title>Identification of RFamide neuropeptides in the medicinal leech.</title>
        <authorList>
            <person name="Evans B.D."/>
            <person name="Pohl J."/>
            <person name="Kartsonis M.A."/>
            <person name="Calabrese R.L."/>
        </authorList>
    </citation>
    <scope>PROTEIN SEQUENCE</scope>
    <scope>AMIDATION AT PHE-4</scope>
</reference>
<keyword id="KW-0027">Amidation</keyword>
<keyword id="KW-0903">Direct protein sequencing</keyword>
<keyword id="KW-0527">Neuropeptide</keyword>
<keyword id="KW-0964">Secreted</keyword>
<comment type="subcellular location">
    <subcellularLocation>
        <location>Secreted</location>
    </subcellularLocation>
</comment>
<comment type="similarity">
    <text evidence="2">Belongs to the FARP (FMRFamide related peptide) family.</text>
</comment>
<proteinExistence type="evidence at protein level"/>
<evidence type="ECO:0000269" key="1">
    <source>
    </source>
</evidence>
<evidence type="ECO:0000305" key="2"/>
<name>FAR3_HIRME</name>
<accession>P42562</accession>
<organism>
    <name type="scientific">Hirudo medicinalis</name>
    <name type="common">Medicinal leech</name>
    <dbReference type="NCBI Taxonomy" id="6421"/>
    <lineage>
        <taxon>Eukaryota</taxon>
        <taxon>Metazoa</taxon>
        <taxon>Spiralia</taxon>
        <taxon>Lophotrochozoa</taxon>
        <taxon>Annelida</taxon>
        <taxon>Clitellata</taxon>
        <taxon>Hirudinea</taxon>
        <taxon>Hirudinida</taxon>
        <taxon>Hirudiniformes</taxon>
        <taxon>Hirudinidae</taxon>
        <taxon>Hirudo</taxon>
    </lineage>
</organism>
<sequence>YLRF</sequence>
<feature type="peptide" id="PRO_0000043679" description="FMRFamide-like neuropeptide YLRF-amide">
    <location>
        <begin position="1"/>
        <end position="4"/>
    </location>
</feature>
<feature type="modified residue" description="Phenylalanine amide" evidence="1">
    <location>
        <position position="4"/>
    </location>
</feature>